<feature type="chain" id="PRO_1000092619" description="Ribosomal RNA small subunit methyltransferase G">
    <location>
        <begin position="1"/>
        <end position="219"/>
    </location>
</feature>
<feature type="binding site" evidence="1">
    <location>
        <position position="85"/>
    </location>
    <ligand>
        <name>S-adenosyl-L-methionine</name>
        <dbReference type="ChEBI" id="CHEBI:59789"/>
    </ligand>
</feature>
<feature type="binding site" evidence="1">
    <location>
        <position position="90"/>
    </location>
    <ligand>
        <name>S-adenosyl-L-methionine</name>
        <dbReference type="ChEBI" id="CHEBI:59789"/>
    </ligand>
</feature>
<feature type="binding site" evidence="1">
    <location>
        <begin position="136"/>
        <end position="137"/>
    </location>
    <ligand>
        <name>S-adenosyl-L-methionine</name>
        <dbReference type="ChEBI" id="CHEBI:59789"/>
    </ligand>
</feature>
<feature type="binding site" evidence="1">
    <location>
        <position position="151"/>
    </location>
    <ligand>
        <name>S-adenosyl-L-methionine</name>
        <dbReference type="ChEBI" id="CHEBI:59789"/>
    </ligand>
</feature>
<organism>
    <name type="scientific">Cellvibrio japonicus (strain Ueda107)</name>
    <name type="common">Pseudomonas fluorescens subsp. cellulosa</name>
    <dbReference type="NCBI Taxonomy" id="498211"/>
    <lineage>
        <taxon>Bacteria</taxon>
        <taxon>Pseudomonadati</taxon>
        <taxon>Pseudomonadota</taxon>
        <taxon>Gammaproteobacteria</taxon>
        <taxon>Cellvibrionales</taxon>
        <taxon>Cellvibrionaceae</taxon>
        <taxon>Cellvibrio</taxon>
    </lineage>
</organism>
<protein>
    <recommendedName>
        <fullName evidence="1">Ribosomal RNA small subunit methyltransferase G</fullName>
        <ecNumber evidence="1">2.1.1.170</ecNumber>
    </recommendedName>
    <alternativeName>
        <fullName evidence="1">16S rRNA 7-methylguanosine methyltransferase</fullName>
        <shortName evidence="1">16S rRNA m7G methyltransferase</shortName>
    </alternativeName>
</protein>
<accession>B3PIT7</accession>
<keyword id="KW-0963">Cytoplasm</keyword>
<keyword id="KW-0489">Methyltransferase</keyword>
<keyword id="KW-1185">Reference proteome</keyword>
<keyword id="KW-0698">rRNA processing</keyword>
<keyword id="KW-0949">S-adenosyl-L-methionine</keyword>
<keyword id="KW-0808">Transferase</keyword>
<comment type="function">
    <text evidence="1">Specifically methylates the N7 position of guanine in position 527 of 16S rRNA.</text>
</comment>
<comment type="catalytic activity">
    <reaction evidence="1">
        <text>guanosine(527) in 16S rRNA + S-adenosyl-L-methionine = N(7)-methylguanosine(527) in 16S rRNA + S-adenosyl-L-homocysteine</text>
        <dbReference type="Rhea" id="RHEA:42732"/>
        <dbReference type="Rhea" id="RHEA-COMP:10209"/>
        <dbReference type="Rhea" id="RHEA-COMP:10210"/>
        <dbReference type="ChEBI" id="CHEBI:57856"/>
        <dbReference type="ChEBI" id="CHEBI:59789"/>
        <dbReference type="ChEBI" id="CHEBI:74269"/>
        <dbReference type="ChEBI" id="CHEBI:74480"/>
        <dbReference type="EC" id="2.1.1.170"/>
    </reaction>
</comment>
<comment type="subcellular location">
    <subcellularLocation>
        <location evidence="1">Cytoplasm</location>
    </subcellularLocation>
</comment>
<comment type="similarity">
    <text evidence="1">Belongs to the methyltransferase superfamily. RNA methyltransferase RsmG family.</text>
</comment>
<evidence type="ECO:0000255" key="1">
    <source>
        <dbReference type="HAMAP-Rule" id="MF_00074"/>
    </source>
</evidence>
<gene>
    <name evidence="1" type="primary">rsmG</name>
    <name type="ordered locus">CJA_3819</name>
</gene>
<proteinExistence type="inferred from homology"/>
<dbReference type="EC" id="2.1.1.170" evidence="1"/>
<dbReference type="EMBL" id="CP000934">
    <property type="protein sequence ID" value="ACE84011.1"/>
    <property type="molecule type" value="Genomic_DNA"/>
</dbReference>
<dbReference type="RefSeq" id="WP_012489382.1">
    <property type="nucleotide sequence ID" value="NC_010995.1"/>
</dbReference>
<dbReference type="SMR" id="B3PIT7"/>
<dbReference type="STRING" id="498211.CJA_3819"/>
<dbReference type="KEGG" id="cja:CJA_3819"/>
<dbReference type="eggNOG" id="COG0357">
    <property type="taxonomic scope" value="Bacteria"/>
</dbReference>
<dbReference type="HOGENOM" id="CLU_065341_2_2_6"/>
<dbReference type="OrthoDB" id="9808773at2"/>
<dbReference type="Proteomes" id="UP000001036">
    <property type="component" value="Chromosome"/>
</dbReference>
<dbReference type="GO" id="GO:0005829">
    <property type="term" value="C:cytosol"/>
    <property type="evidence" value="ECO:0007669"/>
    <property type="project" value="TreeGrafter"/>
</dbReference>
<dbReference type="GO" id="GO:0070043">
    <property type="term" value="F:rRNA (guanine-N7-)-methyltransferase activity"/>
    <property type="evidence" value="ECO:0007669"/>
    <property type="project" value="UniProtKB-UniRule"/>
</dbReference>
<dbReference type="CDD" id="cd02440">
    <property type="entry name" value="AdoMet_MTases"/>
    <property type="match status" value="1"/>
</dbReference>
<dbReference type="Gene3D" id="3.40.50.150">
    <property type="entry name" value="Vaccinia Virus protein VP39"/>
    <property type="match status" value="1"/>
</dbReference>
<dbReference type="HAMAP" id="MF_00074">
    <property type="entry name" value="16SrRNA_methyltr_G"/>
    <property type="match status" value="1"/>
</dbReference>
<dbReference type="InterPro" id="IPR003682">
    <property type="entry name" value="rRNA_ssu_MeTfrase_G"/>
</dbReference>
<dbReference type="InterPro" id="IPR029063">
    <property type="entry name" value="SAM-dependent_MTases_sf"/>
</dbReference>
<dbReference type="NCBIfam" id="TIGR00138">
    <property type="entry name" value="rsmG_gidB"/>
    <property type="match status" value="1"/>
</dbReference>
<dbReference type="PANTHER" id="PTHR31760">
    <property type="entry name" value="S-ADENOSYL-L-METHIONINE-DEPENDENT METHYLTRANSFERASES SUPERFAMILY PROTEIN"/>
    <property type="match status" value="1"/>
</dbReference>
<dbReference type="PANTHER" id="PTHR31760:SF0">
    <property type="entry name" value="S-ADENOSYL-L-METHIONINE-DEPENDENT METHYLTRANSFERASES SUPERFAMILY PROTEIN"/>
    <property type="match status" value="1"/>
</dbReference>
<dbReference type="Pfam" id="PF02527">
    <property type="entry name" value="GidB"/>
    <property type="match status" value="1"/>
</dbReference>
<dbReference type="PIRSF" id="PIRSF003078">
    <property type="entry name" value="GidB"/>
    <property type="match status" value="1"/>
</dbReference>
<dbReference type="SUPFAM" id="SSF53335">
    <property type="entry name" value="S-adenosyl-L-methionine-dependent methyltransferases"/>
    <property type="match status" value="1"/>
</dbReference>
<name>RSMG_CELJU</name>
<sequence length="219" mass="24069">MSDVNSVLRKQLLNGAAQMGVAPGERQTEQLLAYIREFEKWNKAYNLSAVRDVTQMVARHLLDSLSVVPWIARSPYPLARMIDVGTGGGLPGIPLAIMFPEKTFTLLDSNGKKTRFLFHVKTLLGLDNVTVENRRVEEFAPAGLFQGVISRAFASLQDMTEGCAGLLAPGGIYLAMKGLFPEDELVPIAGKIRLVETVKLQVAETDGERHLLILQPQEP</sequence>
<reference key="1">
    <citation type="journal article" date="2008" name="J. Bacteriol.">
        <title>Insights into plant cell wall degradation from the genome sequence of the soil bacterium Cellvibrio japonicus.</title>
        <authorList>
            <person name="DeBoy R.T."/>
            <person name="Mongodin E.F."/>
            <person name="Fouts D.E."/>
            <person name="Tailford L.E."/>
            <person name="Khouri H."/>
            <person name="Emerson J.B."/>
            <person name="Mohamoud Y."/>
            <person name="Watkins K."/>
            <person name="Henrissat B."/>
            <person name="Gilbert H.J."/>
            <person name="Nelson K.E."/>
        </authorList>
    </citation>
    <scope>NUCLEOTIDE SEQUENCE [LARGE SCALE GENOMIC DNA]</scope>
    <source>
        <strain>Ueda107</strain>
    </source>
</reference>